<proteinExistence type="inferred from homology"/>
<keyword id="KW-0963">Cytoplasm</keyword>
<keyword id="KW-0378">Hydrolase</keyword>
<keyword id="KW-0645">Protease</keyword>
<keyword id="KW-1185">Reference proteome</keyword>
<keyword id="KW-0720">Serine protease</keyword>
<name>CLPP_CALS4</name>
<gene>
    <name evidence="1" type="primary">clpP</name>
    <name type="ordered locus">TTE0625</name>
</gene>
<evidence type="ECO:0000255" key="1">
    <source>
        <dbReference type="HAMAP-Rule" id="MF_00444"/>
    </source>
</evidence>
<evidence type="ECO:0000305" key="2"/>
<sequence length="195" mass="21861">MSLVPIVVEQTNRGERAYDIFSRLLKDRIVFLGDEINDTTASLVIAQMLFLEAEDPDKDIWLYINSPGGSITAGLAIYDTMQYIKPDVVTLCVGMAASMAAFLLAAGAKGKRFALPNSEIMIHQPWGGMQGQATDIKIHAERLLRLRDKLERILSENTGQPLEKIKADMERDYFMTAEEAKTYGIIDDILVRHKK</sequence>
<feature type="chain" id="PRO_0000179701" description="ATP-dependent Clp protease proteolytic subunit">
    <location>
        <begin position="1"/>
        <end position="195"/>
    </location>
</feature>
<feature type="active site" description="Nucleophile" evidence="1">
    <location>
        <position position="98"/>
    </location>
</feature>
<feature type="active site" evidence="1">
    <location>
        <position position="123"/>
    </location>
</feature>
<dbReference type="EC" id="3.4.21.92" evidence="1"/>
<dbReference type="EMBL" id="AE008691">
    <property type="protein sequence ID" value="AAM23894.1"/>
    <property type="status" value="ALT_INIT"/>
    <property type="molecule type" value="Genomic_DNA"/>
</dbReference>
<dbReference type="RefSeq" id="WP_041587108.1">
    <property type="nucleotide sequence ID" value="NC_003869.1"/>
</dbReference>
<dbReference type="SMR" id="Q8RC25"/>
<dbReference type="STRING" id="273068.TTE0625"/>
<dbReference type="MEROPS" id="S14.001"/>
<dbReference type="KEGG" id="tte:TTE0625"/>
<dbReference type="eggNOG" id="COG0740">
    <property type="taxonomic scope" value="Bacteria"/>
</dbReference>
<dbReference type="HOGENOM" id="CLU_058707_3_2_9"/>
<dbReference type="OrthoDB" id="9802800at2"/>
<dbReference type="Proteomes" id="UP000000555">
    <property type="component" value="Chromosome"/>
</dbReference>
<dbReference type="GO" id="GO:0005737">
    <property type="term" value="C:cytoplasm"/>
    <property type="evidence" value="ECO:0007669"/>
    <property type="project" value="UniProtKB-SubCell"/>
</dbReference>
<dbReference type="GO" id="GO:0009368">
    <property type="term" value="C:endopeptidase Clp complex"/>
    <property type="evidence" value="ECO:0007669"/>
    <property type="project" value="TreeGrafter"/>
</dbReference>
<dbReference type="GO" id="GO:0004176">
    <property type="term" value="F:ATP-dependent peptidase activity"/>
    <property type="evidence" value="ECO:0007669"/>
    <property type="project" value="InterPro"/>
</dbReference>
<dbReference type="GO" id="GO:0051117">
    <property type="term" value="F:ATPase binding"/>
    <property type="evidence" value="ECO:0007669"/>
    <property type="project" value="TreeGrafter"/>
</dbReference>
<dbReference type="GO" id="GO:0004252">
    <property type="term" value="F:serine-type endopeptidase activity"/>
    <property type="evidence" value="ECO:0007669"/>
    <property type="project" value="UniProtKB-UniRule"/>
</dbReference>
<dbReference type="GO" id="GO:0006515">
    <property type="term" value="P:protein quality control for misfolded or incompletely synthesized proteins"/>
    <property type="evidence" value="ECO:0007669"/>
    <property type="project" value="TreeGrafter"/>
</dbReference>
<dbReference type="CDD" id="cd07017">
    <property type="entry name" value="S14_ClpP_2"/>
    <property type="match status" value="1"/>
</dbReference>
<dbReference type="FunFam" id="3.90.226.10:FF:000001">
    <property type="entry name" value="ATP-dependent Clp protease proteolytic subunit"/>
    <property type="match status" value="1"/>
</dbReference>
<dbReference type="Gene3D" id="3.90.226.10">
    <property type="entry name" value="2-enoyl-CoA Hydratase, Chain A, domain 1"/>
    <property type="match status" value="1"/>
</dbReference>
<dbReference type="HAMAP" id="MF_00444">
    <property type="entry name" value="ClpP"/>
    <property type="match status" value="1"/>
</dbReference>
<dbReference type="InterPro" id="IPR001907">
    <property type="entry name" value="ClpP"/>
</dbReference>
<dbReference type="InterPro" id="IPR029045">
    <property type="entry name" value="ClpP/crotonase-like_dom_sf"/>
</dbReference>
<dbReference type="InterPro" id="IPR023562">
    <property type="entry name" value="ClpP/TepA"/>
</dbReference>
<dbReference type="InterPro" id="IPR033135">
    <property type="entry name" value="ClpP_His_AS"/>
</dbReference>
<dbReference type="InterPro" id="IPR018215">
    <property type="entry name" value="ClpP_Ser_AS"/>
</dbReference>
<dbReference type="NCBIfam" id="TIGR00493">
    <property type="entry name" value="clpP"/>
    <property type="match status" value="1"/>
</dbReference>
<dbReference type="NCBIfam" id="NF001368">
    <property type="entry name" value="PRK00277.1"/>
    <property type="match status" value="1"/>
</dbReference>
<dbReference type="NCBIfam" id="NF009205">
    <property type="entry name" value="PRK12553.1"/>
    <property type="match status" value="1"/>
</dbReference>
<dbReference type="PANTHER" id="PTHR10381">
    <property type="entry name" value="ATP-DEPENDENT CLP PROTEASE PROTEOLYTIC SUBUNIT"/>
    <property type="match status" value="1"/>
</dbReference>
<dbReference type="PANTHER" id="PTHR10381:SF70">
    <property type="entry name" value="ATP-DEPENDENT CLP PROTEASE PROTEOLYTIC SUBUNIT"/>
    <property type="match status" value="1"/>
</dbReference>
<dbReference type="Pfam" id="PF00574">
    <property type="entry name" value="CLP_protease"/>
    <property type="match status" value="1"/>
</dbReference>
<dbReference type="PRINTS" id="PR00127">
    <property type="entry name" value="CLPPROTEASEP"/>
</dbReference>
<dbReference type="SUPFAM" id="SSF52096">
    <property type="entry name" value="ClpP/crotonase"/>
    <property type="match status" value="1"/>
</dbReference>
<dbReference type="PROSITE" id="PS00382">
    <property type="entry name" value="CLP_PROTEASE_HIS"/>
    <property type="match status" value="1"/>
</dbReference>
<dbReference type="PROSITE" id="PS00381">
    <property type="entry name" value="CLP_PROTEASE_SER"/>
    <property type="match status" value="1"/>
</dbReference>
<comment type="function">
    <text evidence="1">Cleaves peptides in various proteins in a process that requires ATP hydrolysis. Has a chymotrypsin-like activity. Plays a major role in the degradation of misfolded proteins.</text>
</comment>
<comment type="catalytic activity">
    <reaction evidence="1">
        <text>Hydrolysis of proteins to small peptides in the presence of ATP and magnesium. alpha-casein is the usual test substrate. In the absence of ATP, only oligopeptides shorter than five residues are hydrolyzed (such as succinyl-Leu-Tyr-|-NHMec, and Leu-Tyr-Leu-|-Tyr-Trp, in which cleavage of the -Tyr-|-Leu- and -Tyr-|-Trp bonds also occurs).</text>
        <dbReference type="EC" id="3.4.21.92"/>
    </reaction>
</comment>
<comment type="subunit">
    <text evidence="1">Fourteen ClpP subunits assemble into 2 heptameric rings which stack back to back to give a disk-like structure with a central cavity, resembling the structure of eukaryotic proteasomes.</text>
</comment>
<comment type="subcellular location">
    <subcellularLocation>
        <location evidence="1">Cytoplasm</location>
    </subcellularLocation>
</comment>
<comment type="similarity">
    <text evidence="1">Belongs to the peptidase S14 family.</text>
</comment>
<comment type="sequence caution" evidence="2">
    <conflict type="erroneous initiation">
        <sequence resource="EMBL-CDS" id="AAM23894"/>
    </conflict>
</comment>
<reference key="1">
    <citation type="journal article" date="2002" name="Genome Res.">
        <title>A complete sequence of the T. tengcongensis genome.</title>
        <authorList>
            <person name="Bao Q."/>
            <person name="Tian Y."/>
            <person name="Li W."/>
            <person name="Xu Z."/>
            <person name="Xuan Z."/>
            <person name="Hu S."/>
            <person name="Dong W."/>
            <person name="Yang J."/>
            <person name="Chen Y."/>
            <person name="Xue Y."/>
            <person name="Xu Y."/>
            <person name="Lai X."/>
            <person name="Huang L."/>
            <person name="Dong X."/>
            <person name="Ma Y."/>
            <person name="Ling L."/>
            <person name="Tan H."/>
            <person name="Chen R."/>
            <person name="Wang J."/>
            <person name="Yu J."/>
            <person name="Yang H."/>
        </authorList>
    </citation>
    <scope>NUCLEOTIDE SEQUENCE [LARGE SCALE GENOMIC DNA]</scope>
    <source>
        <strain>DSM 15242 / JCM 11007 / NBRC 100824 / MB4</strain>
    </source>
</reference>
<organism>
    <name type="scientific">Caldanaerobacter subterraneus subsp. tengcongensis (strain DSM 15242 / JCM 11007 / NBRC 100824 / MB4)</name>
    <name type="common">Thermoanaerobacter tengcongensis</name>
    <dbReference type="NCBI Taxonomy" id="273068"/>
    <lineage>
        <taxon>Bacteria</taxon>
        <taxon>Bacillati</taxon>
        <taxon>Bacillota</taxon>
        <taxon>Clostridia</taxon>
        <taxon>Thermoanaerobacterales</taxon>
        <taxon>Thermoanaerobacteraceae</taxon>
        <taxon>Caldanaerobacter</taxon>
    </lineage>
</organism>
<accession>Q8RC25</accession>
<protein>
    <recommendedName>
        <fullName evidence="1">ATP-dependent Clp protease proteolytic subunit</fullName>
        <ecNumber evidence="1">3.4.21.92</ecNumber>
    </recommendedName>
    <alternativeName>
        <fullName evidence="1">Endopeptidase Clp</fullName>
    </alternativeName>
</protein>